<evidence type="ECO:0000250" key="1"/>
<evidence type="ECO:0000250" key="2">
    <source>
        <dbReference type="UniProtKB" id="P43626"/>
    </source>
</evidence>
<evidence type="ECO:0000255" key="3"/>
<evidence type="ECO:0000256" key="4">
    <source>
        <dbReference type="SAM" id="MobiDB-lite"/>
    </source>
</evidence>
<evidence type="ECO:0000269" key="5">
    <source>
    </source>
</evidence>
<evidence type="ECO:0000269" key="6">
    <source>
    </source>
</evidence>
<evidence type="ECO:0000269" key="7">
    <source>
    </source>
</evidence>
<evidence type="ECO:0000269" key="8">
    <source>
    </source>
</evidence>
<evidence type="ECO:0000303" key="9">
    <source>
    </source>
</evidence>
<evidence type="ECO:0000305" key="10"/>
<evidence type="ECO:0000305" key="11">
    <source>
    </source>
</evidence>
<evidence type="ECO:0000312" key="12">
    <source>
        <dbReference type="HGNC" id="HGNC:6337"/>
    </source>
</evidence>
<comment type="function">
    <text evidence="5 6 7 8">Activating natural killer (NK) receptor that recognizes C2 epitopes of HLA-C alleles. Bridging the innate and adaptive immune systems, NK cells express a number of cell surface receptors which either inhibit or stimulate their cytotoxicity (PubMed:18624290, PubMed:18682925, PubMed:28685972). Able to activate NK cells citotoxicity and cytokine production such as IFNG (PubMed:18624290, PubMed:24269691). Receptor functions are attenuated even lost in some alleles, such as KIR2DS5*002 represented in this entry (PubMed:28685972).</text>
</comment>
<comment type="subunit">
    <text evidence="5">Interacts with TYROBP.</text>
</comment>
<comment type="interaction">
    <interactant intactId="EBI-16823921">
        <id>Q14953</id>
    </interactant>
    <interactant intactId="EBI-9978392">
        <id>A0A583ZBW8</id>
        <label>HLA-C</label>
    </interactant>
    <organismsDiffer>false</organismsDiffer>
    <experiments>6</experiments>
</comment>
<comment type="interaction">
    <interactant intactId="EBI-16823921">
        <id>Q14953</id>
    </interactant>
    <interactant intactId="EBI-1051396">
        <id>P10321</id>
        <label>HLA-C</label>
    </interactant>
    <organismsDiffer>false</organismsDiffer>
    <experiments>30</experiments>
</comment>
<comment type="interaction">
    <interactant intactId="EBI-16823921">
        <id>Q14953</id>
    </interactant>
    <interactant intactId="EBI-2214794">
        <id>O43914</id>
        <label>TYROBP</label>
    </interactant>
    <organismsDiffer>false</organismsDiffer>
    <experiments>3</experiments>
</comment>
<comment type="subcellular location">
    <subcellularLocation>
        <location evidence="5 6 7">Cell membrane</location>
        <topology evidence="10">Single-pass type I membrane protein</topology>
        <orientation evidence="6 7">Extracellular side</orientation>
    </subcellularLocation>
</comment>
<comment type="tissue specificity">
    <text evidence="5">Expressed on a discrete subset of peripheral blood NK cells.</text>
</comment>
<comment type="PTM">
    <text evidence="6 7">N-glycosylated, glycosylation varies depending on the allele which alters cell surface expression levels.</text>
</comment>
<comment type="polymorphism">
    <text evidence="6 7 8">The following alleles are known: KIR2DS5*001, KIR2DS5*002, KIR2DS5*003, KIR2DS5*004, KIR2DS5*005, KIR2DS5*006, KIR2DS5*007, KIR2DS5*008, KIR2DS5*009, KIR2DS5*010 and KIR2DS5*011. Allele KIR2DS5*002 is represented in this entry. Allele KIR2DS5*001 product is not expressed at the surface (PubMed:18682925, PubMed:24269691). In Europeans, KIR2DS5 is essentially monomorphic, with allele KIR2DS5*002 being predominant (PubMed:28685972). However, KIR2DS5 is highly polymorphic in Africans (PubMed:28685972). Alleles KIR2DS5*003, KIR2DS5*004, KIR2DS5*005, KIR2DS5*006, KIR2DS5*007 and KIR2DS5*008 have activating potential and recocognize C2 epitopes of HLA-C alleles (PubMed:28685972). Alleles KIR2DS5*002, KIR2DS5*009, KIR2DS5*010 and KIR2DS5*011 have activating potential but do not recocognize (or with very slight avidity) C2 epitopes of HLA-C alleles (PubMed:28685972). Allele KIR2DS5*006 protects pregnant women from pre-eclampsia (PubMed:28685972). Allele KIR2DS5*003 has increased glycosylation levels due to the variant Asn-144 instead of Ser-144, it also has increased cell surface expression. Alleles with variant Gly-179 instead of Arg-179 show lower levels of glycosylation (PubMed:24269691).</text>
</comment>
<comment type="similarity">
    <text evidence="10">Belongs to the immunoglobulin superfamily.</text>
</comment>
<feature type="signal peptide" evidence="1">
    <location>
        <begin position="1"/>
        <end position="21"/>
    </location>
</feature>
<feature type="chain" id="PRO_0000015086" description="Killer cell immunoglobulin-like receptor 2DS5">
    <location>
        <begin position="22"/>
        <end position="304"/>
    </location>
</feature>
<feature type="topological domain" description="Extracellular" evidence="3">
    <location>
        <begin position="22"/>
        <end position="245"/>
    </location>
</feature>
<feature type="transmembrane region" description="Helical" evidence="3">
    <location>
        <begin position="246"/>
        <end position="264"/>
    </location>
</feature>
<feature type="topological domain" description="Cytoplasmic" evidence="3">
    <location>
        <begin position="265"/>
        <end position="304"/>
    </location>
</feature>
<feature type="domain" description="Ig-like C2-type 1">
    <location>
        <begin position="42"/>
        <end position="107"/>
    </location>
</feature>
<feature type="domain" description="Ig-like C2-type 2">
    <location>
        <begin position="142"/>
        <end position="205"/>
    </location>
</feature>
<feature type="region of interest" description="Disordered" evidence="4">
    <location>
        <begin position="275"/>
        <end position="304"/>
    </location>
</feature>
<feature type="compositionally biased region" description="Basic and acidic residues" evidence="4">
    <location>
        <begin position="288"/>
        <end position="304"/>
    </location>
</feature>
<feature type="glycosylation site" description="N-linked (GlcNAc...) asparagine" evidence="3">
    <location>
        <position position="67"/>
    </location>
</feature>
<feature type="glycosylation site" description="N-linked (GlcNAc...) asparagine" evidence="3">
    <location>
        <position position="84"/>
    </location>
</feature>
<feature type="glycosylation site" description="N-linked (GlcNAc...) asparagine" evidence="3 11">
    <location>
        <position position="178"/>
    </location>
</feature>
<feature type="glycosylation site" description="N-linked (GlcNAc...) asparagine" evidence="3">
    <location>
        <position position="223"/>
    </location>
</feature>
<feature type="disulfide bond" evidence="2">
    <location>
        <begin position="49"/>
        <end position="100"/>
    </location>
</feature>
<feature type="disulfide bond" evidence="2">
    <location>
        <begin position="149"/>
        <end position="198"/>
    </location>
</feature>
<feature type="sequence variant" id="VAR_080126" description="In allele KIR2DS5*001; not expressed at the cell surface when associated in cis with P-132, S-185 and A-195 in allele KIR2DS5*001; no effect cell surface expression." evidence="6">
    <original>S</original>
    <variation>L</variation>
    <location>
        <position position="2"/>
    </location>
</feature>
<feature type="sequence variant" id="VAR_080127" description="In allele KIR2DS5*008; increases binding to C2 epitopes of HLA-C alleles when associated in cis with G-179 in allele KIR2DS5*008." evidence="8">
    <original>H</original>
    <variation>R</variation>
    <location>
        <position position="22"/>
    </location>
</feature>
<feature type="sequence variant" id="VAR_080128" description="In allele KIR2DS5*001; not expressed at the cell surface when associated in cis with R-22, S-185 and A-195 in allele KIR2DS5*001; abolishes cell surface expression." evidence="6">
    <original>S</original>
    <variation>P</variation>
    <location>
        <position position="132"/>
    </location>
</feature>
<feature type="sequence variant" id="VAR_080129" description="In allele KIR2DS5*003; increases cell surface expression, glycosylation levels and binding to C2 epitopes of HLA-C alleles when associated in cis with G-179 in allele KIR2DS5*003." evidence="7 8">
    <original>S</original>
    <variation>N</variation>
    <location>
        <position position="144"/>
    </location>
</feature>
<feature type="sequence variant" id="VAR_080130" description="In allele KIR2DS5*010; decreases binding to C2 epitopes of HLA-C alleles when associated in cis with G-179 and H-203 in allele KIR2DS5*010." evidence="8">
    <original>S</original>
    <variation>F</variation>
    <location>
        <position position="148"/>
    </location>
</feature>
<feature type="sequence variant" id="VAR_080131" description="In alleles KIR2DS5*006 and KIR2DS5*011; increases binding to C2 epitopes of HLA-C alleles when associated in cis with G-179 in allele KIR2DS5*006; decreases binding to C2 epitopes of HLA-C alleles when associated in cis with T-197 in allele KIR2DS5*011." evidence="8">
    <original>P</original>
    <variation>T</variation>
    <location>
        <position position="175"/>
    </location>
</feature>
<feature type="sequence variant" id="VAR_080132" description="In alleles KIR2DS5*003, KIR2DS5*004, KIR2DS5*005, KIR2DS5*006, KIR2DS5*007, KIR2DS5*008 and KIR2DS5*010; increases binding to C2 epitopes of HLA-C alleles in allele KIR2DS5*005; increases binding to C2 epitopes of HLA-C alleles but no effect on cell surface expression when associated in cis with R-22 in allele KIR2DS5*008; increases cell surface expression, glycosylation levels and binding to C2 epitopes of HLA-C alleles when associated in cis with N-144 in allele KIR2DS5*003; decreases binding to C2 epitopes of HLA-C alleles when associated in cis with F-148 and H-203 in allele KIR2DS5*010; increases binding to C2 epitopes of HLA-C alleles when associated in cis with T-175 in allele KIR2DS5*006; increases binding to C2 epitopes of HLA-C alleles when associated in cis with H-203 in allele KIR2DS5*004; increases binding to C2 epitopes of HLA-C alleles when associated in cis with K-237 in allele KIR2DS5*007." evidence="7 8">
    <original>R</original>
    <variation>G</variation>
    <location>
        <position position="179"/>
    </location>
</feature>
<feature type="sequence variant" id="VAR_080133" description="In allele KIR2DS5*001; not expressed at the cell surface when associated in cis with R-22, P-132 and A-195 in allele KIR2DS5*001; abolishes cell surface expression." evidence="6">
    <original>F</original>
    <variation>S</variation>
    <location>
        <position position="185"/>
    </location>
</feature>
<feature type="sequence variant" id="VAR_080134" description="In allele KIR2DS5*001; not expressed at the cell surface when associated in cis with R-22, P-132 and S-185 in allele KIR2DS5*001; decreases cell surface expression." evidence="6">
    <original>T</original>
    <variation>A</variation>
    <location>
        <position position="195"/>
    </location>
</feature>
<feature type="sequence variant" id="VAR_080135" description="In alleles KIR2DS5*009 and KIR2DS5*011; decreases binding to C2 epitopes of HLA-C alleles but no effect on cell surface expression in allele KIR2DS5*009; decreases binding to C2 epitopes of HLA-C alleles when associated in cis with T-175 in allele KIR2DS5*011." evidence="7 8">
    <original>R</original>
    <variation>T</variation>
    <location>
        <position position="197"/>
    </location>
</feature>
<feature type="sequence variant" id="VAR_080136" description="In alleles KIR2DS5*004 and KIR2DS5*010; increases binding to C2 epitopes of HLA-C alleles when associated in cis with G-179 in allele KIR2DS5*004; decreases binding to C2 epitopes of HLA-C alleles when associated in cis with F-148 and G-179 in allele KIR2DS5*010." evidence="8">
    <original>R</original>
    <variation>H</variation>
    <location>
        <position position="203"/>
    </location>
</feature>
<feature type="sequence variant" id="VAR_080137" description="In allele KIR2DS5*007; increases binding to C2 epitopes of HLA-C alleles when associated in cis with G-179 in allele KIR2DS5*007." evidence="8">
    <original>E</original>
    <variation>K</variation>
    <location>
        <position position="237"/>
    </location>
</feature>
<feature type="mutagenesis site" description="Increases expression at the cell surface." evidence="6">
    <original>H</original>
    <variation>D</variation>
    <location>
        <position position="68"/>
    </location>
</feature>
<feature type="mutagenesis site" description="Reduces expression at the cell surface." evidence="6">
    <original>H</original>
    <variation>L</variation>
    <location>
        <position position="68"/>
    </location>
</feature>
<organism>
    <name type="scientific">Homo sapiens</name>
    <name type="common">Human</name>
    <dbReference type="NCBI Taxonomy" id="9606"/>
    <lineage>
        <taxon>Eukaryota</taxon>
        <taxon>Metazoa</taxon>
        <taxon>Chordata</taxon>
        <taxon>Craniata</taxon>
        <taxon>Vertebrata</taxon>
        <taxon>Euteleostomi</taxon>
        <taxon>Mammalia</taxon>
        <taxon>Eutheria</taxon>
        <taxon>Euarchontoglires</taxon>
        <taxon>Primates</taxon>
        <taxon>Haplorrhini</taxon>
        <taxon>Catarrhini</taxon>
        <taxon>Hominidae</taxon>
        <taxon>Homo</taxon>
    </lineage>
</organism>
<keyword id="KW-1003">Cell membrane</keyword>
<keyword id="KW-1015">Disulfide bond</keyword>
<keyword id="KW-0325">Glycoprotein</keyword>
<keyword id="KW-0393">Immunoglobulin domain</keyword>
<keyword id="KW-0472">Membrane</keyword>
<keyword id="KW-0675">Receptor</keyword>
<keyword id="KW-1185">Reference proteome</keyword>
<keyword id="KW-0677">Repeat</keyword>
<keyword id="KW-0732">Signal</keyword>
<keyword id="KW-0812">Transmembrane</keyword>
<keyword id="KW-1133">Transmembrane helix</keyword>
<dbReference type="EMBL" id="L76672">
    <property type="protein sequence ID" value="AAB36600.1"/>
    <property type="molecule type" value="mRNA"/>
</dbReference>
<dbReference type="EMBL" id="KU645197">
    <property type="protein sequence ID" value="ANJ04806.1"/>
    <property type="molecule type" value="Genomic_DNA"/>
</dbReference>
<dbReference type="EMBL" id="KU645196">
    <property type="protein sequence ID" value="ANJ04799.1"/>
    <property type="molecule type" value="Genomic_DNA"/>
</dbReference>
<dbReference type="EMBL" id="KP420441">
    <property type="protein sequence ID" value="AJI81015.1"/>
    <property type="molecule type" value="Genomic_DNA"/>
</dbReference>
<dbReference type="EMBL" id="AL133414">
    <property type="status" value="NOT_ANNOTATED_CDS"/>
    <property type="molecule type" value="Genomic_DNA"/>
</dbReference>
<dbReference type="EMBL" id="GU182355">
    <property type="status" value="NOT_ANNOTATED_CDS"/>
    <property type="molecule type" value="Genomic_DNA"/>
</dbReference>
<dbReference type="EMBL" id="CU459006">
    <property type="status" value="NOT_ANNOTATED_CDS"/>
    <property type="molecule type" value="Genomic_DNA"/>
</dbReference>
<dbReference type="RefSeq" id="NP_055328.2">
    <property type="nucleotide sequence ID" value="NM_014513.3"/>
</dbReference>
<dbReference type="SMR" id="Q14953"/>
<dbReference type="FunCoup" id="Q14953">
    <property type="interactions" value="588"/>
</dbReference>
<dbReference type="IntAct" id="Q14953">
    <property type="interactions" value="15"/>
</dbReference>
<dbReference type="GlyCosmos" id="Q14953">
    <property type="glycosylation" value="4 sites, No reported glycans"/>
</dbReference>
<dbReference type="GlyGen" id="Q14953">
    <property type="glycosylation" value="6 sites"/>
</dbReference>
<dbReference type="iPTMnet" id="Q14953"/>
<dbReference type="BioMuta" id="KIR2DS5"/>
<dbReference type="DMDM" id="2833260"/>
<dbReference type="MassIVE" id="Q14953"/>
<dbReference type="PeptideAtlas" id="Q14953"/>
<dbReference type="ProteomicsDB" id="60256"/>
<dbReference type="DNASU" id="3810"/>
<dbReference type="Ensembl" id="ENST00000614053.1">
    <property type="protein sequence ID" value="ENSP00000482547.1"/>
    <property type="gene ID" value="ENSG00000275047.1"/>
</dbReference>
<dbReference type="Ensembl" id="ENST00000618443.1">
    <property type="protein sequence ID" value="ENSP00000484843.1"/>
    <property type="gene ID" value="ENSG00000274739.1"/>
</dbReference>
<dbReference type="Ensembl" id="ENST00000619698.1">
    <property type="protein sequence ID" value="ENSP00000483733.1"/>
    <property type="gene ID" value="ENSG00000277650.1"/>
</dbReference>
<dbReference type="Ensembl" id="ENST00000639440.1">
    <property type="protein sequence ID" value="ENSP00000492394.1"/>
    <property type="gene ID" value="ENSG00000288206.1"/>
</dbReference>
<dbReference type="Ensembl" id="ENST00000644792.1">
    <property type="protein sequence ID" value="ENSP00000496107.1"/>
    <property type="gene ID" value="ENSG00000288206.1"/>
</dbReference>
<dbReference type="GeneID" id="3810"/>
<dbReference type="KEGG" id="hsa:3810"/>
<dbReference type="MANE-Select" id="ENST00000614053.1">
    <property type="protein sequence ID" value="ENSP00000482547.1"/>
    <property type="RefSeq nucleotide sequence ID" value="NM_014513.3"/>
    <property type="RefSeq protein sequence ID" value="NP_055328.2"/>
</dbReference>
<dbReference type="AGR" id="HGNC:6337"/>
<dbReference type="CTD" id="3810"/>
<dbReference type="DisGeNET" id="3810"/>
<dbReference type="GeneCards" id="KIR2DS5"/>
<dbReference type="HGNC" id="HGNC:6337">
    <property type="gene designation" value="KIR2DS5"/>
</dbReference>
<dbReference type="MIM" id="604956">
    <property type="type" value="gene"/>
</dbReference>
<dbReference type="neXtProt" id="NX_Q14953"/>
<dbReference type="InParanoid" id="Q14953"/>
<dbReference type="PAN-GO" id="Q14953">
    <property type="GO annotations" value="1 GO annotation based on evolutionary models"/>
</dbReference>
<dbReference type="PhylomeDB" id="Q14953"/>
<dbReference type="PathwayCommons" id="Q14953"/>
<dbReference type="Reactome" id="R-HSA-2172127">
    <property type="pathway name" value="DAP12 interactions"/>
</dbReference>
<dbReference type="SignaLink" id="Q14953"/>
<dbReference type="BioGRID-ORCS" id="3810">
    <property type="hits" value="2 hits in 36 CRISPR screens"/>
</dbReference>
<dbReference type="GenomeRNAi" id="3810"/>
<dbReference type="Pharos" id="Q14953">
    <property type="development level" value="Tdark"/>
</dbReference>
<dbReference type="PRO" id="PR:Q14953"/>
<dbReference type="Proteomes" id="UP000005640">
    <property type="component" value="Unplaced"/>
</dbReference>
<dbReference type="RNAct" id="Q14953">
    <property type="molecule type" value="protein"/>
</dbReference>
<dbReference type="GO" id="GO:0016020">
    <property type="term" value="C:membrane"/>
    <property type="evidence" value="ECO:0000314"/>
    <property type="project" value="UniProtKB"/>
</dbReference>
<dbReference type="GO" id="GO:0005886">
    <property type="term" value="C:plasma membrane"/>
    <property type="evidence" value="ECO:0000314"/>
    <property type="project" value="UniProtKB"/>
</dbReference>
<dbReference type="GO" id="GO:0030110">
    <property type="term" value="F:HLA-C specific inhibitory MHC class I receptor activity"/>
    <property type="evidence" value="ECO:0000303"/>
    <property type="project" value="UniProtKB"/>
</dbReference>
<dbReference type="GO" id="GO:0006955">
    <property type="term" value="P:immune response"/>
    <property type="evidence" value="ECO:0000303"/>
    <property type="project" value="UniProtKB"/>
</dbReference>
<dbReference type="GO" id="GO:0002764">
    <property type="term" value="P:immune response-regulating signaling pathway"/>
    <property type="evidence" value="ECO:0000318"/>
    <property type="project" value="GO_Central"/>
</dbReference>
<dbReference type="FunFam" id="2.60.40.10:FF:000033">
    <property type="entry name" value="Killer cell immunoglobulin-like receptor"/>
    <property type="match status" value="1"/>
</dbReference>
<dbReference type="FunFam" id="2.60.40.10:FF:000049">
    <property type="entry name" value="Leukocyte immunoglobulin-like receptor subfamily B member 1"/>
    <property type="match status" value="1"/>
</dbReference>
<dbReference type="Gene3D" id="2.60.40.10">
    <property type="entry name" value="Immunoglobulins"/>
    <property type="match status" value="2"/>
</dbReference>
<dbReference type="InterPro" id="IPR036179">
    <property type="entry name" value="Ig-like_dom_sf"/>
</dbReference>
<dbReference type="InterPro" id="IPR013783">
    <property type="entry name" value="Ig-like_fold"/>
</dbReference>
<dbReference type="InterPro" id="IPR050412">
    <property type="entry name" value="Ig-like_Receptors_ImmuneReg"/>
</dbReference>
<dbReference type="InterPro" id="IPR003599">
    <property type="entry name" value="Ig_sub"/>
</dbReference>
<dbReference type="InterPro" id="IPR013151">
    <property type="entry name" value="Immunoglobulin_dom"/>
</dbReference>
<dbReference type="PANTHER" id="PTHR11738:SF168">
    <property type="entry name" value="IMMUNOGLOBULIN SUBTYPE DOMAIN-CONTAINING PROTEIN-RELATED"/>
    <property type="match status" value="1"/>
</dbReference>
<dbReference type="PANTHER" id="PTHR11738">
    <property type="entry name" value="MHC CLASS I NK CELL RECEPTOR"/>
    <property type="match status" value="1"/>
</dbReference>
<dbReference type="Pfam" id="PF00047">
    <property type="entry name" value="ig"/>
    <property type="match status" value="2"/>
</dbReference>
<dbReference type="SMART" id="SM00409">
    <property type="entry name" value="IG"/>
    <property type="match status" value="2"/>
</dbReference>
<dbReference type="SUPFAM" id="SSF48726">
    <property type="entry name" value="Immunoglobulin"/>
    <property type="match status" value="2"/>
</dbReference>
<reference key="1">
    <citation type="journal article" date="1996" name="Immunogenetics">
        <title>Alternatively spliced forms of human killer inhibitory receptors.</title>
        <authorList>
            <person name="Doehring C."/>
            <person name="Samaridis J."/>
            <person name="Colonna M."/>
        </authorList>
    </citation>
    <scope>NUCLEOTIDE SEQUENCE [MRNA]</scope>
</reference>
<reference key="2">
    <citation type="journal article" date="2017" name="Genes Immun.">
        <title>Revealing complete complex KIR haplotypes phased by long-read sequencing technology.</title>
        <authorList>
            <person name="Roe D."/>
            <person name="Vierra-Green C."/>
            <person name="Pyo C.W."/>
            <person name="Eng K."/>
            <person name="Hall R."/>
            <person name="Kuang R."/>
            <person name="Spellman S."/>
            <person name="Ranade S."/>
            <person name="Geraghty D.E."/>
            <person name="Maiers M."/>
        </authorList>
    </citation>
    <scope>NUCLEOTIDE SEQUENCE [GENOMIC DNA]</scope>
</reference>
<reference key="3">
    <citation type="journal article" date="2004" name="Nature">
        <title>The DNA sequence and biology of human chromosome 19.</title>
        <authorList>
            <person name="Grimwood J."/>
            <person name="Gordon L.A."/>
            <person name="Olsen A.S."/>
            <person name="Terry A."/>
            <person name="Schmutz J."/>
            <person name="Lamerdin J.E."/>
            <person name="Hellsten U."/>
            <person name="Goodstein D."/>
            <person name="Couronne O."/>
            <person name="Tran-Gyamfi M."/>
            <person name="Aerts A."/>
            <person name="Altherr M."/>
            <person name="Ashworth L."/>
            <person name="Bajorek E."/>
            <person name="Black S."/>
            <person name="Branscomb E."/>
            <person name="Caenepeel S."/>
            <person name="Carrano A.V."/>
            <person name="Caoile C."/>
            <person name="Chan Y.M."/>
            <person name="Christensen M."/>
            <person name="Cleland C.A."/>
            <person name="Copeland A."/>
            <person name="Dalin E."/>
            <person name="Dehal P."/>
            <person name="Denys M."/>
            <person name="Detter J.C."/>
            <person name="Escobar J."/>
            <person name="Flowers D."/>
            <person name="Fotopulos D."/>
            <person name="Garcia C."/>
            <person name="Georgescu A.M."/>
            <person name="Glavina T."/>
            <person name="Gomez M."/>
            <person name="Gonzales E."/>
            <person name="Groza M."/>
            <person name="Hammon N."/>
            <person name="Hawkins T."/>
            <person name="Haydu L."/>
            <person name="Ho I."/>
            <person name="Huang W."/>
            <person name="Israni S."/>
            <person name="Jett J."/>
            <person name="Kadner K."/>
            <person name="Kimball H."/>
            <person name="Kobayashi A."/>
            <person name="Larionov V."/>
            <person name="Leem S.-H."/>
            <person name="Lopez F."/>
            <person name="Lou Y."/>
            <person name="Lowry S."/>
            <person name="Malfatti S."/>
            <person name="Martinez D."/>
            <person name="McCready P.M."/>
            <person name="Medina C."/>
            <person name="Morgan J."/>
            <person name="Nelson K."/>
            <person name="Nolan M."/>
            <person name="Ovcharenko I."/>
            <person name="Pitluck S."/>
            <person name="Pollard M."/>
            <person name="Popkie A.P."/>
            <person name="Predki P."/>
            <person name="Quan G."/>
            <person name="Ramirez L."/>
            <person name="Rash S."/>
            <person name="Retterer J."/>
            <person name="Rodriguez A."/>
            <person name="Rogers S."/>
            <person name="Salamov A."/>
            <person name="Salazar A."/>
            <person name="She X."/>
            <person name="Smith D."/>
            <person name="Slezak T."/>
            <person name="Solovyev V."/>
            <person name="Thayer N."/>
            <person name="Tice H."/>
            <person name="Tsai M."/>
            <person name="Ustaszewska A."/>
            <person name="Vo N."/>
            <person name="Wagner M."/>
            <person name="Wheeler J."/>
            <person name="Wu K."/>
            <person name="Xie G."/>
            <person name="Yang J."/>
            <person name="Dubchak I."/>
            <person name="Furey T.S."/>
            <person name="DeJong P."/>
            <person name="Dickson M."/>
            <person name="Gordon D."/>
            <person name="Eichler E.E."/>
            <person name="Pennacchio L.A."/>
            <person name="Richardson P."/>
            <person name="Stubbs L."/>
            <person name="Rokhsar D.S."/>
            <person name="Myers R.M."/>
            <person name="Rubin E.M."/>
            <person name="Lucas S.M."/>
        </authorList>
    </citation>
    <scope>NUCLEOTIDE SEQUENCE [LARGE SCALE GENOMIC DNA]</scope>
</reference>
<reference key="4">
    <citation type="journal article" date="2008" name="Eur. J. Immunol.">
        <title>Evidence that the KIR2DS5 gene codes for a surface receptor triggering natural killer cell function.</title>
        <authorList>
            <person name="Della Chiesa M."/>
            <person name="Romeo E."/>
            <person name="Falco M."/>
            <person name="Balsamo M."/>
            <person name="Augugliaro R."/>
            <person name="Moretta L."/>
            <person name="Bottino C."/>
            <person name="Moretta A."/>
            <person name="Vitale M."/>
        </authorList>
    </citation>
    <scope>FUNCTION</scope>
    <scope>SUBCELLULAR LOCATION</scope>
    <scope>TISSUE SPECIFICITY</scope>
    <scope>INTERACTION WITH TYROBP</scope>
</reference>
<reference key="5">
    <citation type="journal article" date="2008" name="Immunogenetics">
        <title>Extracellular domain alterations impact surface expression of stimulatory natural killer cell receptor KIR2DS5.</title>
        <authorList>
            <person name="Steiner N.K."/>
            <person name="Dakshanamurthy S."/>
            <person name="VandenBussche C.J."/>
            <person name="Hurley C.K."/>
        </authorList>
    </citation>
    <scope>POLYMORPHISM</scope>
    <scope>SUBCELLULAR LOCATION</scope>
    <scope>MUTAGENESIS OF HIS-68</scope>
    <scope>GLYCOSYLATION</scope>
    <scope>CHARACTERIZATION OF VARIANTS LEU-2; PRO-132; SER-185 AND ALA-195</scope>
</reference>
<reference key="6">
    <citation type="journal article" date="2014" name="Hum. Immunol.">
        <title>Allelic variation of killer cell immunoglobulin-like receptor 2DS5 impacts glycosylation altering cell surface expression levels.</title>
        <authorList>
            <person name="Steiner N.K."/>
            <person name="Dakshanamurthy S."/>
            <person name="Nguyen N."/>
            <person name="Hurley C.K."/>
        </authorList>
    </citation>
    <scope>FUNCTION</scope>
    <scope>POLYMORPHISM</scope>
    <scope>GLYCOSYLATION AT ASN-178</scope>
    <scope>SUBCELLULAR LOCATION</scope>
    <scope>CHARACTERIZATION OF VARIANTS ASN-144; GLY-179 AND THR-197</scope>
</reference>
<reference key="7">
    <citation type="journal article" date="2017" name="Immun. Inflammation. Dis.">
        <title>KIR2DS5 allotypes that recognize the C2 epitope of HLA-C are common among Africans and absent from Europeans.</title>
        <authorList>
            <person name="Blokhuis J.H."/>
            <person name="Hilton H.G."/>
            <person name="Guethlein L.A."/>
            <person name="Norman P.J."/>
            <person name="Nemat-Gorgani N."/>
            <person name="Nakimuli A."/>
            <person name="Chazara O."/>
            <person name="Moffett A."/>
            <person name="Parham P."/>
        </authorList>
    </citation>
    <scope>POLYMORPHISM</scope>
    <scope>FUNCTION</scope>
    <scope>VARIANTS ARG-22; ASN-144; PHE-148; THR-175; GLY-179; THR-197; HIS-203 AND LYS-237</scope>
    <scope>CHARACTERIZATION OF VARIANTS ARG-22; ASN-144; PHE-148; THR-175; GLY-179; THR-197; HIS-203 AND LYS-237</scope>
</reference>
<protein>
    <recommendedName>
        <fullName evidence="10">Killer cell immunoglobulin-like receptor 2DS5</fullName>
    </recommendedName>
    <alternativeName>
        <fullName>CD158 antigen-like family member G</fullName>
    </alternativeName>
    <alternativeName>
        <fullName>Natural killer-associated transcript 9</fullName>
        <shortName>NKAT-9</shortName>
    </alternativeName>
    <cdAntigenName>CD158g</cdAntigenName>
</protein>
<gene>
    <name evidence="9 12" type="primary">KIR2DS5</name>
    <name type="synonym">CD158G</name>
    <name type="synonym">NKAT9</name>
</gene>
<accession>Q14953</accession>
<accession>A0A0C4ZMZ1</accession>
<sequence>MSLMVISMACVAFFLLQGAWPHEGFRRKPSLLAHPGPLVKSEETVILQCWSDVMFEHFLLHREGTFNHTLRLIGEHIDGVSKGNFSIGRMTQDLAGTYRCYGSVTHSPYQLSAPSDPLDIVITGLYEKPSLSAQPGPTVLAGESVTLSCSSRSSYDMYHLSREGEAHERRLPAGPKVNRTFQADFPLDPATHGGTYRCFGSFRDSPYEWSKSSDPLLVSVTGNSSNSWPSPTEPSSETGNPRHLHVLIGTSVVKLPFTILLFFLLHRWCSNKKNASVMDQGPAGNRTVNREDSDEQDHQEVSYA</sequence>
<proteinExistence type="evidence at protein level"/>
<name>KI2S5_HUMAN</name>